<protein>
    <recommendedName>
        <fullName evidence="1">Bifunctional protein FolD</fullName>
    </recommendedName>
    <domain>
        <recommendedName>
            <fullName evidence="1">Methylenetetrahydrofolate dehydrogenase</fullName>
            <ecNumber evidence="1">1.5.1.5</ecNumber>
        </recommendedName>
    </domain>
    <domain>
        <recommendedName>
            <fullName evidence="1">Methenyltetrahydrofolate cyclohydrolase</fullName>
            <ecNumber evidence="1">3.5.4.9</ecNumber>
        </recommendedName>
    </domain>
</protein>
<comment type="function">
    <text evidence="1">Catalyzes the oxidation of 5,10-methylenetetrahydrofolate to 5,10-methenyltetrahydrofolate and then the hydrolysis of 5,10-methenyltetrahydrofolate to 10-formyltetrahydrofolate.</text>
</comment>
<comment type="catalytic activity">
    <reaction evidence="1">
        <text>(6R)-5,10-methylene-5,6,7,8-tetrahydrofolate + NADP(+) = (6R)-5,10-methenyltetrahydrofolate + NADPH</text>
        <dbReference type="Rhea" id="RHEA:22812"/>
        <dbReference type="ChEBI" id="CHEBI:15636"/>
        <dbReference type="ChEBI" id="CHEBI:57455"/>
        <dbReference type="ChEBI" id="CHEBI:57783"/>
        <dbReference type="ChEBI" id="CHEBI:58349"/>
        <dbReference type="EC" id="1.5.1.5"/>
    </reaction>
</comment>
<comment type="catalytic activity">
    <reaction evidence="1">
        <text>(6R)-5,10-methenyltetrahydrofolate + H2O = (6R)-10-formyltetrahydrofolate + H(+)</text>
        <dbReference type="Rhea" id="RHEA:23700"/>
        <dbReference type="ChEBI" id="CHEBI:15377"/>
        <dbReference type="ChEBI" id="CHEBI:15378"/>
        <dbReference type="ChEBI" id="CHEBI:57455"/>
        <dbReference type="ChEBI" id="CHEBI:195366"/>
        <dbReference type="EC" id="3.5.4.9"/>
    </reaction>
</comment>
<comment type="pathway">
    <text evidence="1">One-carbon metabolism; tetrahydrofolate interconversion.</text>
</comment>
<comment type="subunit">
    <text evidence="1">Homodimer.</text>
</comment>
<comment type="similarity">
    <text evidence="1">Belongs to the tetrahydrofolate dehydrogenase/cyclohydrolase family.</text>
</comment>
<feature type="chain" id="PRO_0000268544" description="Bifunctional protein FolD">
    <location>
        <begin position="1"/>
        <end position="271"/>
    </location>
</feature>
<feature type="binding site" evidence="1">
    <location>
        <begin position="154"/>
        <end position="156"/>
    </location>
    <ligand>
        <name>NADP(+)</name>
        <dbReference type="ChEBI" id="CHEBI:58349"/>
    </ligand>
</feature>
<feature type="binding site" evidence="1">
    <location>
        <position position="181"/>
    </location>
    <ligand>
        <name>NADP(+)</name>
        <dbReference type="ChEBI" id="CHEBI:58349"/>
    </ligand>
</feature>
<feature type="binding site" evidence="1">
    <location>
        <position position="222"/>
    </location>
    <ligand>
        <name>NADP(+)</name>
        <dbReference type="ChEBI" id="CHEBI:58349"/>
    </ligand>
</feature>
<accession>Q9X288</accession>
<gene>
    <name evidence="1" type="primary">folD</name>
    <name type="ordered locus">TM_1767</name>
</gene>
<dbReference type="EC" id="1.5.1.5" evidence="1"/>
<dbReference type="EC" id="3.5.4.9" evidence="1"/>
<dbReference type="EMBL" id="AE000512">
    <property type="protein sequence ID" value="AAD36831.1"/>
    <property type="molecule type" value="Genomic_DNA"/>
</dbReference>
<dbReference type="PIR" id="F72212">
    <property type="entry name" value="F72212"/>
</dbReference>
<dbReference type="RefSeq" id="NP_229564.1">
    <property type="nucleotide sequence ID" value="NC_000853.1"/>
</dbReference>
<dbReference type="RefSeq" id="WP_004082313.1">
    <property type="nucleotide sequence ID" value="NC_000853.1"/>
</dbReference>
<dbReference type="SMR" id="Q9X288"/>
<dbReference type="FunCoup" id="Q9X288">
    <property type="interactions" value="316"/>
</dbReference>
<dbReference type="STRING" id="243274.TM_1767"/>
<dbReference type="PaxDb" id="243274-THEMA_05390"/>
<dbReference type="EnsemblBacteria" id="AAD36831">
    <property type="protein sequence ID" value="AAD36831"/>
    <property type="gene ID" value="TM_1767"/>
</dbReference>
<dbReference type="KEGG" id="tma:TM1767"/>
<dbReference type="KEGG" id="tmi:THEMA_05390"/>
<dbReference type="KEGG" id="tmm:Tmari_1776"/>
<dbReference type="KEGG" id="tmw:THMA_1811"/>
<dbReference type="eggNOG" id="COG0190">
    <property type="taxonomic scope" value="Bacteria"/>
</dbReference>
<dbReference type="InParanoid" id="Q9X288"/>
<dbReference type="OrthoDB" id="9803580at2"/>
<dbReference type="UniPathway" id="UPA00193"/>
<dbReference type="Proteomes" id="UP000008183">
    <property type="component" value="Chromosome"/>
</dbReference>
<dbReference type="GO" id="GO:0005829">
    <property type="term" value="C:cytosol"/>
    <property type="evidence" value="ECO:0000318"/>
    <property type="project" value="GO_Central"/>
</dbReference>
<dbReference type="GO" id="GO:0004477">
    <property type="term" value="F:methenyltetrahydrofolate cyclohydrolase activity"/>
    <property type="evidence" value="ECO:0000318"/>
    <property type="project" value="GO_Central"/>
</dbReference>
<dbReference type="GO" id="GO:0004488">
    <property type="term" value="F:methylenetetrahydrofolate dehydrogenase (NADP+) activity"/>
    <property type="evidence" value="ECO:0000318"/>
    <property type="project" value="GO_Central"/>
</dbReference>
<dbReference type="GO" id="GO:0000105">
    <property type="term" value="P:L-histidine biosynthetic process"/>
    <property type="evidence" value="ECO:0007669"/>
    <property type="project" value="UniProtKB-KW"/>
</dbReference>
<dbReference type="GO" id="GO:0009086">
    <property type="term" value="P:methionine biosynthetic process"/>
    <property type="evidence" value="ECO:0007669"/>
    <property type="project" value="UniProtKB-KW"/>
</dbReference>
<dbReference type="GO" id="GO:0006164">
    <property type="term" value="P:purine nucleotide biosynthetic process"/>
    <property type="evidence" value="ECO:0007669"/>
    <property type="project" value="UniProtKB-KW"/>
</dbReference>
<dbReference type="GO" id="GO:0035999">
    <property type="term" value="P:tetrahydrofolate interconversion"/>
    <property type="evidence" value="ECO:0000318"/>
    <property type="project" value="GO_Central"/>
</dbReference>
<dbReference type="CDD" id="cd01080">
    <property type="entry name" value="NAD_bind_m-THF_DH_Cyclohyd"/>
    <property type="match status" value="1"/>
</dbReference>
<dbReference type="Gene3D" id="3.40.50.10860">
    <property type="entry name" value="Leucine Dehydrogenase, chain A, domain 1"/>
    <property type="match status" value="1"/>
</dbReference>
<dbReference type="Gene3D" id="3.40.50.720">
    <property type="entry name" value="NAD(P)-binding Rossmann-like Domain"/>
    <property type="match status" value="1"/>
</dbReference>
<dbReference type="HAMAP" id="MF_01576">
    <property type="entry name" value="THF_DHG_CYH"/>
    <property type="match status" value="1"/>
</dbReference>
<dbReference type="InterPro" id="IPR046346">
    <property type="entry name" value="Aminoacid_DH-like_N_sf"/>
</dbReference>
<dbReference type="InterPro" id="IPR036291">
    <property type="entry name" value="NAD(P)-bd_dom_sf"/>
</dbReference>
<dbReference type="InterPro" id="IPR000672">
    <property type="entry name" value="THF_DH/CycHdrlase"/>
</dbReference>
<dbReference type="InterPro" id="IPR020630">
    <property type="entry name" value="THF_DH/CycHdrlase_cat_dom"/>
</dbReference>
<dbReference type="InterPro" id="IPR020631">
    <property type="entry name" value="THF_DH/CycHdrlase_NAD-bd_dom"/>
</dbReference>
<dbReference type="PANTHER" id="PTHR48099:SF5">
    <property type="entry name" value="C-1-TETRAHYDROFOLATE SYNTHASE, CYTOPLASMIC"/>
    <property type="match status" value="1"/>
</dbReference>
<dbReference type="PANTHER" id="PTHR48099">
    <property type="entry name" value="C-1-TETRAHYDROFOLATE SYNTHASE, CYTOPLASMIC-RELATED"/>
    <property type="match status" value="1"/>
</dbReference>
<dbReference type="Pfam" id="PF00763">
    <property type="entry name" value="THF_DHG_CYH"/>
    <property type="match status" value="1"/>
</dbReference>
<dbReference type="Pfam" id="PF02882">
    <property type="entry name" value="THF_DHG_CYH_C"/>
    <property type="match status" value="1"/>
</dbReference>
<dbReference type="PRINTS" id="PR00085">
    <property type="entry name" value="THFDHDRGNASE"/>
</dbReference>
<dbReference type="SUPFAM" id="SSF53223">
    <property type="entry name" value="Aminoacid dehydrogenase-like, N-terminal domain"/>
    <property type="match status" value="1"/>
</dbReference>
<dbReference type="SUPFAM" id="SSF51735">
    <property type="entry name" value="NAD(P)-binding Rossmann-fold domains"/>
    <property type="match status" value="1"/>
</dbReference>
<evidence type="ECO:0000255" key="1">
    <source>
        <dbReference type="HAMAP-Rule" id="MF_01576"/>
    </source>
</evidence>
<sequence>MWIDCKTIARSIEERTKERVEKLGFTPKLVSVACTDDPSALSYLKSQRKKAEKLGIAFEIMNVSPEEIVSTLKKLGSDESVNGVFVARPFPLGLDEKEILSSVPVEKDVEGVNPANLGLLLYDEEIFPPCTAEAAVRILERETNLSGKRVTVVGRSVTVGKPLALMLLKKGRDATVTVCHSRTVNLEEITKNSDIVVVAVGRAHFLKKNMVKEGAIVIDVGINYVDGKLQGDVDPSVEEIARVTPVPGGVGQVTTALLFEHVVRAAERQRK</sequence>
<proteinExistence type="inferred from homology"/>
<organism>
    <name type="scientific">Thermotoga maritima (strain ATCC 43589 / DSM 3109 / JCM 10099 / NBRC 100826 / MSB8)</name>
    <dbReference type="NCBI Taxonomy" id="243274"/>
    <lineage>
        <taxon>Bacteria</taxon>
        <taxon>Thermotogati</taxon>
        <taxon>Thermotogota</taxon>
        <taxon>Thermotogae</taxon>
        <taxon>Thermotogales</taxon>
        <taxon>Thermotogaceae</taxon>
        <taxon>Thermotoga</taxon>
    </lineage>
</organism>
<reference key="1">
    <citation type="journal article" date="1999" name="Nature">
        <title>Evidence for lateral gene transfer between Archaea and Bacteria from genome sequence of Thermotoga maritima.</title>
        <authorList>
            <person name="Nelson K.E."/>
            <person name="Clayton R.A."/>
            <person name="Gill S.R."/>
            <person name="Gwinn M.L."/>
            <person name="Dodson R.J."/>
            <person name="Haft D.H."/>
            <person name="Hickey E.K."/>
            <person name="Peterson J.D."/>
            <person name="Nelson W.C."/>
            <person name="Ketchum K.A."/>
            <person name="McDonald L.A."/>
            <person name="Utterback T.R."/>
            <person name="Malek J.A."/>
            <person name="Linher K.D."/>
            <person name="Garrett M.M."/>
            <person name="Stewart A.M."/>
            <person name="Cotton M.D."/>
            <person name="Pratt M.S."/>
            <person name="Phillips C.A."/>
            <person name="Richardson D.L."/>
            <person name="Heidelberg J.F."/>
            <person name="Sutton G.G."/>
            <person name="Fleischmann R.D."/>
            <person name="Eisen J.A."/>
            <person name="White O."/>
            <person name="Salzberg S.L."/>
            <person name="Smith H.O."/>
            <person name="Venter J.C."/>
            <person name="Fraser C.M."/>
        </authorList>
    </citation>
    <scope>NUCLEOTIDE SEQUENCE [LARGE SCALE GENOMIC DNA]</scope>
    <source>
        <strain>ATCC 43589 / DSM 3109 / JCM 10099 / NBRC 100826 / MSB8</strain>
    </source>
</reference>
<keyword id="KW-0028">Amino-acid biosynthesis</keyword>
<keyword id="KW-0368">Histidine biosynthesis</keyword>
<keyword id="KW-0378">Hydrolase</keyword>
<keyword id="KW-0486">Methionine biosynthesis</keyword>
<keyword id="KW-0511">Multifunctional enzyme</keyword>
<keyword id="KW-0521">NADP</keyword>
<keyword id="KW-0554">One-carbon metabolism</keyword>
<keyword id="KW-0560">Oxidoreductase</keyword>
<keyword id="KW-0658">Purine biosynthesis</keyword>
<keyword id="KW-1185">Reference proteome</keyword>
<name>FOLD_THEMA</name>